<name>NU4LM_PLAMN</name>
<sequence>MSLINMNLMLAFTMSLTGLLMYRHHLMSALLCLEGMMLSLFTLTTLTILNTHFTLTNMIPIILLVFAACEAAIGLALLVMISSTYGTDYVQSLNLLQC</sequence>
<geneLocation type="mitochondrion"/>
<gene>
    <name type="primary">MT-ND4L</name>
    <name type="synonym">MTND4L</name>
    <name type="synonym">NADH4L</name>
    <name type="synonym">ND4L</name>
</gene>
<keyword id="KW-0249">Electron transport</keyword>
<keyword id="KW-0472">Membrane</keyword>
<keyword id="KW-0496">Mitochondrion</keyword>
<keyword id="KW-0999">Mitochondrion inner membrane</keyword>
<keyword id="KW-0520">NAD</keyword>
<keyword id="KW-0679">Respiratory chain</keyword>
<keyword id="KW-1278">Translocase</keyword>
<keyword id="KW-0812">Transmembrane</keyword>
<keyword id="KW-1133">Transmembrane helix</keyword>
<keyword id="KW-0813">Transport</keyword>
<keyword id="KW-0830">Ubiquinone</keyword>
<evidence type="ECO:0000250" key="1">
    <source>
        <dbReference type="UniProtKB" id="P03901"/>
    </source>
</evidence>
<evidence type="ECO:0000250" key="2">
    <source>
        <dbReference type="UniProtKB" id="P03902"/>
    </source>
</evidence>
<evidence type="ECO:0000255" key="3"/>
<evidence type="ECO:0000305" key="4"/>
<comment type="function">
    <text evidence="1">Core subunit of the mitochondrial membrane respiratory chain NADH dehydrogenase (Complex I) which catalyzes electron transfer from NADH through the respiratory chain, using ubiquinone as an electron acceptor. Part of the enzyme membrane arm which is embedded in the lipid bilayer and involved in proton translocation.</text>
</comment>
<comment type="catalytic activity">
    <reaction evidence="1">
        <text>a ubiquinone + NADH + 5 H(+)(in) = a ubiquinol + NAD(+) + 4 H(+)(out)</text>
        <dbReference type="Rhea" id="RHEA:29091"/>
        <dbReference type="Rhea" id="RHEA-COMP:9565"/>
        <dbReference type="Rhea" id="RHEA-COMP:9566"/>
        <dbReference type="ChEBI" id="CHEBI:15378"/>
        <dbReference type="ChEBI" id="CHEBI:16389"/>
        <dbReference type="ChEBI" id="CHEBI:17976"/>
        <dbReference type="ChEBI" id="CHEBI:57540"/>
        <dbReference type="ChEBI" id="CHEBI:57945"/>
        <dbReference type="EC" id="7.1.1.2"/>
    </reaction>
    <physiologicalReaction direction="left-to-right" evidence="1">
        <dbReference type="Rhea" id="RHEA:29092"/>
    </physiologicalReaction>
</comment>
<comment type="subunit">
    <text evidence="2">Core subunit of respiratory chain NADH dehydrogenase (Complex I) which is composed of 45 different subunits.</text>
</comment>
<comment type="subcellular location">
    <subcellularLocation>
        <location evidence="2">Mitochondrion inner membrane</location>
        <topology evidence="3">Multi-pass membrane protein</topology>
    </subcellularLocation>
</comment>
<comment type="similarity">
    <text evidence="4">Belongs to the complex I subunit 4L family.</text>
</comment>
<reference key="1">
    <citation type="journal article" date="2004" name="Gene">
        <title>Mitogenomic analyses provide new insights into cetacean origin and evolution.</title>
        <authorList>
            <person name="Arnason U."/>
            <person name="Gullberg A."/>
            <person name="Janke A."/>
        </authorList>
    </citation>
    <scope>NUCLEOTIDE SEQUENCE [GENOMIC DNA]</scope>
</reference>
<dbReference type="EC" id="7.1.1.2"/>
<dbReference type="EMBL" id="AJ554058">
    <property type="protein sequence ID" value="CAD87983.1"/>
    <property type="molecule type" value="Genomic_DNA"/>
</dbReference>
<dbReference type="RefSeq" id="NP_944706.1">
    <property type="nucleotide sequence ID" value="NC_005275.1"/>
</dbReference>
<dbReference type="SMR" id="Q70RU1"/>
<dbReference type="GeneID" id="2658876"/>
<dbReference type="CTD" id="4539"/>
<dbReference type="GO" id="GO:0005743">
    <property type="term" value="C:mitochondrial inner membrane"/>
    <property type="evidence" value="ECO:0000250"/>
    <property type="project" value="UniProtKB"/>
</dbReference>
<dbReference type="GO" id="GO:0045271">
    <property type="term" value="C:respiratory chain complex I"/>
    <property type="evidence" value="ECO:0000250"/>
    <property type="project" value="UniProtKB"/>
</dbReference>
<dbReference type="GO" id="GO:0008137">
    <property type="term" value="F:NADH dehydrogenase (ubiquinone) activity"/>
    <property type="evidence" value="ECO:0000250"/>
    <property type="project" value="UniProtKB"/>
</dbReference>
<dbReference type="GO" id="GO:0042773">
    <property type="term" value="P:ATP synthesis coupled electron transport"/>
    <property type="evidence" value="ECO:0007669"/>
    <property type="project" value="InterPro"/>
</dbReference>
<dbReference type="FunFam" id="1.10.287.3510:FF:000002">
    <property type="entry name" value="NADH-ubiquinone oxidoreductase chain 4L"/>
    <property type="match status" value="1"/>
</dbReference>
<dbReference type="Gene3D" id="1.10.287.3510">
    <property type="match status" value="1"/>
</dbReference>
<dbReference type="InterPro" id="IPR001133">
    <property type="entry name" value="NADH_UbQ_OxRdtase_chain4L/K"/>
</dbReference>
<dbReference type="InterPro" id="IPR039428">
    <property type="entry name" value="NUOK/Mnh_C1-like"/>
</dbReference>
<dbReference type="PANTHER" id="PTHR11434:SF0">
    <property type="entry name" value="NADH-UBIQUINONE OXIDOREDUCTASE CHAIN 4L"/>
    <property type="match status" value="1"/>
</dbReference>
<dbReference type="PANTHER" id="PTHR11434">
    <property type="entry name" value="NADH-UBIQUINONE OXIDOREDUCTASE SUBUNIT ND4L"/>
    <property type="match status" value="1"/>
</dbReference>
<dbReference type="Pfam" id="PF00420">
    <property type="entry name" value="Oxidored_q2"/>
    <property type="match status" value="1"/>
</dbReference>
<feature type="chain" id="PRO_0000275105" description="NADH-ubiquinone oxidoreductase chain 4L">
    <location>
        <begin position="1"/>
        <end position="98"/>
    </location>
</feature>
<feature type="transmembrane region" description="Helical" evidence="3">
    <location>
        <begin position="1"/>
        <end position="21"/>
    </location>
</feature>
<feature type="transmembrane region" description="Helical" evidence="3">
    <location>
        <begin position="29"/>
        <end position="49"/>
    </location>
</feature>
<feature type="transmembrane region" description="Helical" evidence="3">
    <location>
        <begin position="61"/>
        <end position="81"/>
    </location>
</feature>
<protein>
    <recommendedName>
        <fullName>NADH-ubiquinone oxidoreductase chain 4L</fullName>
        <ecNumber>7.1.1.2</ecNumber>
    </recommendedName>
    <alternativeName>
        <fullName>NADH dehydrogenase subunit 4L</fullName>
    </alternativeName>
</protein>
<accession>Q70RU1</accession>
<proteinExistence type="inferred from homology"/>
<organism>
    <name type="scientific">Platanista minor</name>
    <name type="common">Indus river dolphin</name>
    <name type="synonym">Platanista gangetica subsp. minor</name>
    <dbReference type="NCBI Taxonomy" id="48752"/>
    <lineage>
        <taxon>Eukaryota</taxon>
        <taxon>Metazoa</taxon>
        <taxon>Chordata</taxon>
        <taxon>Craniata</taxon>
        <taxon>Vertebrata</taxon>
        <taxon>Euteleostomi</taxon>
        <taxon>Mammalia</taxon>
        <taxon>Eutheria</taxon>
        <taxon>Laurasiatheria</taxon>
        <taxon>Artiodactyla</taxon>
        <taxon>Whippomorpha</taxon>
        <taxon>Cetacea</taxon>
        <taxon>Odontoceti</taxon>
        <taxon>Platanistidae</taxon>
        <taxon>Platanista</taxon>
    </lineage>
</organism>